<sequence>ALAQLLSLAR</sequence>
<feature type="chain" id="PRO_0000371493" description="Uncharacterized protein SMPP12">
    <location>
        <begin position="1" status="less than"/>
        <end position="10" status="greater than"/>
    </location>
</feature>
<feature type="unsure residue" description="L or I" evidence="1">
    <location>
        <position position="2"/>
    </location>
</feature>
<feature type="unsure residue" description="L or I" evidence="1">
    <location>
        <position position="5"/>
    </location>
</feature>
<feature type="unsure residue" description="L or I" evidence="1">
    <location>
        <position position="6"/>
    </location>
</feature>
<feature type="unsure residue" description="L or I" evidence="1">
    <location>
        <position position="8"/>
    </location>
</feature>
<feature type="non-terminal residue" evidence="2">
    <location>
        <position position="1"/>
    </location>
</feature>
<feature type="non-terminal residue" evidence="2">
    <location>
        <position position="10"/>
    </location>
</feature>
<organism>
    <name type="scientific">Nautilus macromphalus</name>
    <name type="common">Bellybutton nautilus</name>
    <dbReference type="NCBI Taxonomy" id="34576"/>
    <lineage>
        <taxon>Eukaryota</taxon>
        <taxon>Metazoa</taxon>
        <taxon>Spiralia</taxon>
        <taxon>Lophotrochozoa</taxon>
        <taxon>Mollusca</taxon>
        <taxon>Cephalopoda</taxon>
        <taxon>Nautiloidea</taxon>
        <taxon>Nautilida</taxon>
        <taxon>Nautilidae</taxon>
        <taxon>Nautilus</taxon>
    </lineage>
</organism>
<name>SMP12_NAUMA</name>
<comment type="tissue specificity">
    <text evidence="1">Nacreous layer of shell.</text>
</comment>
<proteinExistence type="evidence at protein level"/>
<evidence type="ECO:0000269" key="1">
    <source>
    </source>
</evidence>
<evidence type="ECO:0000303" key="2">
    <source>
    </source>
</evidence>
<protein>
    <recommendedName>
        <fullName evidence="2">Uncharacterized protein SMPP12</fullName>
    </recommendedName>
</protein>
<keyword id="KW-0903">Direct protein sequencing</keyword>
<accession>P85377</accession>
<reference key="1">
    <citation type="journal article" date="2009" name="ChemBioChem">
        <title>Evolution of nacre: biochemistry and 'shellomics' of the shell organic matrix of the cephalopod Nautilus macromphalus.</title>
        <authorList>
            <person name="Marie B."/>
            <person name="Marin F."/>
            <person name="Marie A."/>
            <person name="Bedouet L."/>
            <person name="Dubost L."/>
            <person name="Alcaraz G."/>
            <person name="Milet C."/>
            <person name="Luquet G."/>
        </authorList>
    </citation>
    <scope>PROTEIN SEQUENCE</scope>
    <scope>TISSUE SPECIFICITY</scope>
    <source>
        <tissue>Shell</tissue>
    </source>
</reference>